<protein>
    <recommendedName>
        <fullName evidence="9">Cytosolic carboxypeptidase 4</fullName>
        <ecNumber evidence="6">3.4.17.-</ecNumber>
        <ecNumber evidence="6">3.4.17.24</ecNumber>
    </recommendedName>
    <alternativeName>
        <fullName>ATP/GTP-binding protein-like 1</fullName>
    </alternativeName>
    <alternativeName>
        <fullName evidence="10">Protein deglutamylase CCP4</fullName>
    </alternativeName>
</protein>
<organism>
    <name type="scientific">Mus musculus</name>
    <name type="common">Mouse</name>
    <dbReference type="NCBI Taxonomy" id="10090"/>
    <lineage>
        <taxon>Eukaryota</taxon>
        <taxon>Metazoa</taxon>
        <taxon>Chordata</taxon>
        <taxon>Craniata</taxon>
        <taxon>Vertebrata</taxon>
        <taxon>Euteleostomi</taxon>
        <taxon>Mammalia</taxon>
        <taxon>Eutheria</taxon>
        <taxon>Euarchontoglires</taxon>
        <taxon>Glires</taxon>
        <taxon>Rodentia</taxon>
        <taxon>Myomorpha</taxon>
        <taxon>Muroidea</taxon>
        <taxon>Muridae</taxon>
        <taxon>Murinae</taxon>
        <taxon>Mus</taxon>
        <taxon>Mus</taxon>
    </lineage>
</organism>
<keyword id="KW-0025">Alternative splicing</keyword>
<keyword id="KW-0121">Carboxypeptidase</keyword>
<keyword id="KW-0963">Cytoplasm</keyword>
<keyword id="KW-0378">Hydrolase</keyword>
<keyword id="KW-0479">Metal-binding</keyword>
<keyword id="KW-0482">Metalloprotease</keyword>
<keyword id="KW-0645">Protease</keyword>
<keyword id="KW-1185">Reference proteome</keyword>
<keyword id="KW-0862">Zinc</keyword>
<evidence type="ECO:0000250" key="1"/>
<evidence type="ECO:0000250" key="2">
    <source>
        <dbReference type="UniProtKB" id="Q96MI9"/>
    </source>
</evidence>
<evidence type="ECO:0000255" key="3">
    <source>
        <dbReference type="PROSITE-ProRule" id="PRU01379"/>
    </source>
</evidence>
<evidence type="ECO:0000256" key="4">
    <source>
        <dbReference type="SAM" id="MobiDB-lite"/>
    </source>
</evidence>
<evidence type="ECO:0000269" key="5">
    <source>
    </source>
</evidence>
<evidence type="ECO:0000269" key="6">
    <source>
    </source>
</evidence>
<evidence type="ECO:0000269" key="7">
    <source>
    </source>
</evidence>
<evidence type="ECO:0000303" key="8">
    <source>
    </source>
</evidence>
<evidence type="ECO:0000303" key="9">
    <source>
    </source>
</evidence>
<evidence type="ECO:0000305" key="10"/>
<evidence type="ECO:0000305" key="11">
    <source>
    </source>
</evidence>
<evidence type="ECO:0000312" key="12">
    <source>
        <dbReference type="MGI" id="MGI:3646469"/>
    </source>
</evidence>
<comment type="function">
    <text evidence="6">Metallocarboxypeptidase that mediates deglutamylation of tubulin and non-tubulin target proteins (PubMed:21074048). Catalyzes the removal of polyglutamate side chains present on the gamma-carboxyl group of glutamate residues within the C-terminal tail of tubulin protein (PubMed:21074048). Specifically cleaves tubulin long-side-chains, while it is not able to remove the branching point glutamate (PubMed:21074048). Also catalyzes the removal of polyglutamate residues from the carboxy-terminus of non-tubulin proteins such as MYLK (PubMed:21074048).</text>
</comment>
<comment type="catalytic activity">
    <reaction evidence="6">
        <text>(L-glutamyl)(n+1)-gamma-L-glutamyl-L-glutamyl-[protein] + H2O = (L-glutamyl)(n)-gamma-L-glutamyl-L-glutamyl-[protein] + L-glutamate</text>
        <dbReference type="Rhea" id="RHEA:60004"/>
        <dbReference type="Rhea" id="RHEA-COMP:15519"/>
        <dbReference type="Rhea" id="RHEA-COMP:15675"/>
        <dbReference type="ChEBI" id="CHEBI:15377"/>
        <dbReference type="ChEBI" id="CHEBI:29985"/>
        <dbReference type="ChEBI" id="CHEBI:143623"/>
    </reaction>
    <physiologicalReaction direction="left-to-right" evidence="11">
        <dbReference type="Rhea" id="RHEA:60005"/>
    </physiologicalReaction>
</comment>
<comment type="catalytic activity">
    <reaction evidence="6">
        <text>C-terminal L-alpha-aminoacyl-L-glutamyl-L-glutamyl-[tubulin] + H2O = C-terminal L-alpha-aminoacyl-L-glutamyl-[tubulin] + L-glutamate</text>
        <dbReference type="Rhea" id="RHEA:63792"/>
        <dbReference type="Rhea" id="RHEA-COMP:16435"/>
        <dbReference type="Rhea" id="RHEA-COMP:16436"/>
        <dbReference type="ChEBI" id="CHEBI:15377"/>
        <dbReference type="ChEBI" id="CHEBI:29985"/>
        <dbReference type="ChEBI" id="CHEBI:149555"/>
        <dbReference type="ChEBI" id="CHEBI:149556"/>
        <dbReference type="EC" id="3.4.17.24"/>
    </reaction>
    <physiologicalReaction direction="left-to-right" evidence="11">
        <dbReference type="Rhea" id="RHEA:63793"/>
    </physiologicalReaction>
</comment>
<comment type="cofactor">
    <cofactor evidence="1">
        <name>Zn(2+)</name>
        <dbReference type="ChEBI" id="CHEBI:29105"/>
    </cofactor>
    <text evidence="1">Binds 1 zinc ion per subunit.</text>
</comment>
<comment type="subunit">
    <text evidence="2 6">Interacts with MYLK (PubMed:21074048). Interacts with TCF4 (By similarity).</text>
</comment>
<comment type="subcellular location">
    <subcellularLocation>
        <location evidence="2">Cytoplasm</location>
        <location evidence="2">Cytosol</location>
    </subcellularLocation>
</comment>
<comment type="alternative products">
    <event type="alternative splicing"/>
    <isoform>
        <id>Q09M05-4</id>
        <name>1</name>
        <sequence type="displayed"/>
    </isoform>
    <isoform>
        <id>Q09M05-2</id>
        <name>2</name>
        <sequence type="described" ref="VSP_060162 VSP_060163 VSP_060164"/>
    </isoform>
    <isoform>
        <id>Q09M05-3</id>
        <name>3</name>
        <sequence type="described" ref="VSP_060162 VSP_060165 VSP_060166"/>
    </isoform>
</comment>
<comment type="tissue specificity">
    <text evidence="5 6 7">Widely expressed at low level. Expressed in eye, muscle, pituitary, testis and to a lower extent in brain.</text>
</comment>
<comment type="similarity">
    <text evidence="10">Belongs to the peptidase M14 family.</text>
</comment>
<reference key="1">
    <citation type="journal article" date="2007" name="FASEB J.">
        <title>A novel subfamily of mouse cytosolic carboxypeptidases.</title>
        <authorList>
            <person name="Kalinina E."/>
            <person name="Biswas R."/>
            <person name="Berezniuk I."/>
            <person name="Hermoso A."/>
            <person name="Aviles F.X."/>
            <person name="Fricker L.D."/>
        </authorList>
    </citation>
    <scope>NUCLEOTIDE SEQUENCE [MRNA] (ISOFORM 3)</scope>
    <scope>TISSUE SPECIFICITY</scope>
    <source>
        <strain>C57BLKS/J</strain>
    </source>
</reference>
<reference key="2">
    <citation type="journal article" date="2010" name="Cell">
        <title>A family of protein-deglutamylating enzymes associated with neurodegeneration.</title>
        <authorList>
            <person name="Rogowski K."/>
            <person name="van Dijk J."/>
            <person name="Magiera M.M."/>
            <person name="Bosc C."/>
            <person name="Deloulme J.C."/>
            <person name="Bosson A."/>
            <person name="Peris L."/>
            <person name="Gold N.D."/>
            <person name="Lacroix B."/>
            <person name="Grau M.B."/>
            <person name="Bec N."/>
            <person name="Larroque C."/>
            <person name="Desagher S."/>
            <person name="Holzer M."/>
            <person name="Andrieux A."/>
            <person name="Moutin M.J."/>
            <person name="Janke C."/>
        </authorList>
    </citation>
    <scope>NUCLEOTIDE SEQUENCE [MRNA] (ISOFORM 1)</scope>
    <scope>FUNCTION</scope>
    <scope>CATALYTIC ACTIVITY</scope>
    <scope>TISSUE SPECIFICITY</scope>
    <scope>INTERACTION WITH MYLK</scope>
    <scope>MUTAGENESIS OF HIS-803 AND GLU-806</scope>
</reference>
<reference key="3">
    <citation type="journal article" date="2005" name="Science">
        <title>The transcriptional landscape of the mammalian genome.</title>
        <authorList>
            <person name="Carninci P."/>
            <person name="Kasukawa T."/>
            <person name="Katayama S."/>
            <person name="Gough J."/>
            <person name="Frith M.C."/>
            <person name="Maeda N."/>
            <person name="Oyama R."/>
            <person name="Ravasi T."/>
            <person name="Lenhard B."/>
            <person name="Wells C."/>
            <person name="Kodzius R."/>
            <person name="Shimokawa K."/>
            <person name="Bajic V.B."/>
            <person name="Brenner S.E."/>
            <person name="Batalov S."/>
            <person name="Forrest A.R."/>
            <person name="Zavolan M."/>
            <person name="Davis M.J."/>
            <person name="Wilming L.G."/>
            <person name="Aidinis V."/>
            <person name="Allen J.E."/>
            <person name="Ambesi-Impiombato A."/>
            <person name="Apweiler R."/>
            <person name="Aturaliya R.N."/>
            <person name="Bailey T.L."/>
            <person name="Bansal M."/>
            <person name="Baxter L."/>
            <person name="Beisel K.W."/>
            <person name="Bersano T."/>
            <person name="Bono H."/>
            <person name="Chalk A.M."/>
            <person name="Chiu K.P."/>
            <person name="Choudhary V."/>
            <person name="Christoffels A."/>
            <person name="Clutterbuck D.R."/>
            <person name="Crowe M.L."/>
            <person name="Dalla E."/>
            <person name="Dalrymple B.P."/>
            <person name="de Bono B."/>
            <person name="Della Gatta G."/>
            <person name="di Bernardo D."/>
            <person name="Down T."/>
            <person name="Engstrom P."/>
            <person name="Fagiolini M."/>
            <person name="Faulkner G."/>
            <person name="Fletcher C.F."/>
            <person name="Fukushima T."/>
            <person name="Furuno M."/>
            <person name="Futaki S."/>
            <person name="Gariboldi M."/>
            <person name="Georgii-Hemming P."/>
            <person name="Gingeras T.R."/>
            <person name="Gojobori T."/>
            <person name="Green R.E."/>
            <person name="Gustincich S."/>
            <person name="Harbers M."/>
            <person name="Hayashi Y."/>
            <person name="Hensch T.K."/>
            <person name="Hirokawa N."/>
            <person name="Hill D."/>
            <person name="Huminiecki L."/>
            <person name="Iacono M."/>
            <person name="Ikeo K."/>
            <person name="Iwama A."/>
            <person name="Ishikawa T."/>
            <person name="Jakt M."/>
            <person name="Kanapin A."/>
            <person name="Katoh M."/>
            <person name="Kawasawa Y."/>
            <person name="Kelso J."/>
            <person name="Kitamura H."/>
            <person name="Kitano H."/>
            <person name="Kollias G."/>
            <person name="Krishnan S.P."/>
            <person name="Kruger A."/>
            <person name="Kummerfeld S.K."/>
            <person name="Kurochkin I.V."/>
            <person name="Lareau L.F."/>
            <person name="Lazarevic D."/>
            <person name="Lipovich L."/>
            <person name="Liu J."/>
            <person name="Liuni S."/>
            <person name="McWilliam S."/>
            <person name="Madan Babu M."/>
            <person name="Madera M."/>
            <person name="Marchionni L."/>
            <person name="Matsuda H."/>
            <person name="Matsuzawa S."/>
            <person name="Miki H."/>
            <person name="Mignone F."/>
            <person name="Miyake S."/>
            <person name="Morris K."/>
            <person name="Mottagui-Tabar S."/>
            <person name="Mulder N."/>
            <person name="Nakano N."/>
            <person name="Nakauchi H."/>
            <person name="Ng P."/>
            <person name="Nilsson R."/>
            <person name="Nishiguchi S."/>
            <person name="Nishikawa S."/>
            <person name="Nori F."/>
            <person name="Ohara O."/>
            <person name="Okazaki Y."/>
            <person name="Orlando V."/>
            <person name="Pang K.C."/>
            <person name="Pavan W.J."/>
            <person name="Pavesi G."/>
            <person name="Pesole G."/>
            <person name="Petrovsky N."/>
            <person name="Piazza S."/>
            <person name="Reed J."/>
            <person name="Reid J.F."/>
            <person name="Ring B.Z."/>
            <person name="Ringwald M."/>
            <person name="Rost B."/>
            <person name="Ruan Y."/>
            <person name="Salzberg S.L."/>
            <person name="Sandelin A."/>
            <person name="Schneider C."/>
            <person name="Schoenbach C."/>
            <person name="Sekiguchi K."/>
            <person name="Semple C.A."/>
            <person name="Seno S."/>
            <person name="Sessa L."/>
            <person name="Sheng Y."/>
            <person name="Shibata Y."/>
            <person name="Shimada H."/>
            <person name="Shimada K."/>
            <person name="Silva D."/>
            <person name="Sinclair B."/>
            <person name="Sperling S."/>
            <person name="Stupka E."/>
            <person name="Sugiura K."/>
            <person name="Sultana R."/>
            <person name="Takenaka Y."/>
            <person name="Taki K."/>
            <person name="Tammoja K."/>
            <person name="Tan S.L."/>
            <person name="Tang S."/>
            <person name="Taylor M.S."/>
            <person name="Tegner J."/>
            <person name="Teichmann S.A."/>
            <person name="Ueda H.R."/>
            <person name="van Nimwegen E."/>
            <person name="Verardo R."/>
            <person name="Wei C.L."/>
            <person name="Yagi K."/>
            <person name="Yamanishi H."/>
            <person name="Zabarovsky E."/>
            <person name="Zhu S."/>
            <person name="Zimmer A."/>
            <person name="Hide W."/>
            <person name="Bult C."/>
            <person name="Grimmond S.M."/>
            <person name="Teasdale R.D."/>
            <person name="Liu E.T."/>
            <person name="Brusic V."/>
            <person name="Quackenbush J."/>
            <person name="Wahlestedt C."/>
            <person name="Mattick J.S."/>
            <person name="Hume D.A."/>
            <person name="Kai C."/>
            <person name="Sasaki D."/>
            <person name="Tomaru Y."/>
            <person name="Fukuda S."/>
            <person name="Kanamori-Katayama M."/>
            <person name="Suzuki M."/>
            <person name="Aoki J."/>
            <person name="Arakawa T."/>
            <person name="Iida J."/>
            <person name="Imamura K."/>
            <person name="Itoh M."/>
            <person name="Kato T."/>
            <person name="Kawaji H."/>
            <person name="Kawagashira N."/>
            <person name="Kawashima T."/>
            <person name="Kojima M."/>
            <person name="Kondo S."/>
            <person name="Konno H."/>
            <person name="Nakano K."/>
            <person name="Ninomiya N."/>
            <person name="Nishio T."/>
            <person name="Okada M."/>
            <person name="Plessy C."/>
            <person name="Shibata K."/>
            <person name="Shiraki T."/>
            <person name="Suzuki S."/>
            <person name="Tagami M."/>
            <person name="Waki K."/>
            <person name="Watahiki A."/>
            <person name="Okamura-Oho Y."/>
            <person name="Suzuki H."/>
            <person name="Kawai J."/>
            <person name="Hayashizaki Y."/>
        </authorList>
    </citation>
    <scope>NUCLEOTIDE SEQUENCE [LARGE SCALE MRNA] (ISOFORM 2)</scope>
    <source>
        <strain>C57BL/6J</strain>
        <tissue>Lung</tissue>
    </source>
</reference>
<reference key="4">
    <citation type="journal article" date="2009" name="PLoS Biol.">
        <title>Lineage-specific biology revealed by a finished genome assembly of the mouse.</title>
        <authorList>
            <person name="Church D.M."/>
            <person name="Goodstadt L."/>
            <person name="Hillier L.W."/>
            <person name="Zody M.C."/>
            <person name="Goldstein S."/>
            <person name="She X."/>
            <person name="Bult C.J."/>
            <person name="Agarwala R."/>
            <person name="Cherry J.L."/>
            <person name="DiCuccio M."/>
            <person name="Hlavina W."/>
            <person name="Kapustin Y."/>
            <person name="Meric P."/>
            <person name="Maglott D."/>
            <person name="Birtle Z."/>
            <person name="Marques A.C."/>
            <person name="Graves T."/>
            <person name="Zhou S."/>
            <person name="Teague B."/>
            <person name="Potamousis K."/>
            <person name="Churas C."/>
            <person name="Place M."/>
            <person name="Herschleb J."/>
            <person name="Runnheim R."/>
            <person name="Forrest D."/>
            <person name="Amos-Landgraf J."/>
            <person name="Schwartz D.C."/>
            <person name="Cheng Z."/>
            <person name="Lindblad-Toh K."/>
            <person name="Eichler E.E."/>
            <person name="Ponting C.P."/>
        </authorList>
    </citation>
    <scope>NUCLEOTIDE SEQUENCE [LARGE SCALE GENOMIC DNA]</scope>
    <source>
        <strain>C57BLKS/J</strain>
    </source>
</reference>
<reference key="5">
    <citation type="journal article" date="2014" name="Mol. Biol. Cell">
        <title>The cytosolic carboxypeptidases CCP2 and CCP3 catalyze posttranslational removal of acidic amino acids.</title>
        <authorList>
            <person name="Tort O."/>
            <person name="Tanco S."/>
            <person name="Rocha C."/>
            <person name="Bieche I."/>
            <person name="Seixas C."/>
            <person name="Bosc C."/>
            <person name="Andrieux A."/>
            <person name="Moutin M.J."/>
            <person name="Aviles F.X."/>
            <person name="Lorenzo J."/>
            <person name="Janke C."/>
        </authorList>
    </citation>
    <scope>TISSUE SPECIFICITY</scope>
</reference>
<dbReference type="EC" id="3.4.17.-" evidence="6"/>
<dbReference type="EC" id="3.4.17.24" evidence="6"/>
<dbReference type="EMBL" id="DQ867033">
    <property type="protein sequence ID" value="ABI51952.1"/>
    <property type="molecule type" value="mRNA"/>
</dbReference>
<dbReference type="EMBL" id="FN429927">
    <property type="protein sequence ID" value="CAZ69802.1"/>
    <property type="molecule type" value="mRNA"/>
</dbReference>
<dbReference type="EMBL" id="AK052433">
    <property type="protein sequence ID" value="BAC34986.1"/>
    <property type="molecule type" value="mRNA"/>
</dbReference>
<dbReference type="EMBL" id="AC115830">
    <property type="status" value="NOT_ANNOTATED_CDS"/>
    <property type="molecule type" value="Genomic_DNA"/>
</dbReference>
<dbReference type="EMBL" id="AC165265">
    <property type="status" value="NOT_ANNOTATED_CDS"/>
    <property type="molecule type" value="Genomic_DNA"/>
</dbReference>
<dbReference type="EMBL" id="AC121812">
    <property type="status" value="NOT_ANNOTATED_CDS"/>
    <property type="molecule type" value="Genomic_DNA"/>
</dbReference>
<dbReference type="EMBL" id="AC123792">
    <property type="status" value="NOT_ANNOTATED_CDS"/>
    <property type="molecule type" value="Genomic_DNA"/>
</dbReference>
<dbReference type="EMBL" id="AC121971">
    <property type="status" value="NOT_ANNOTATED_CDS"/>
    <property type="molecule type" value="Genomic_DNA"/>
</dbReference>
<dbReference type="CCDS" id="CCDS85321.1">
    <molecule id="Q09M05-4"/>
</dbReference>
<dbReference type="RefSeq" id="NP_001186153.1">
    <property type="nucleotide sequence ID" value="NM_001199224.1"/>
</dbReference>
<dbReference type="SMR" id="Q09M05"/>
<dbReference type="FunCoup" id="Q09M05">
    <property type="interactions" value="333"/>
</dbReference>
<dbReference type="STRING" id="10090.ENSMUSP00000119721"/>
<dbReference type="MEROPS" id="M14.030"/>
<dbReference type="iPTMnet" id="Q09M05"/>
<dbReference type="PhosphoSitePlus" id="Q09M05"/>
<dbReference type="PaxDb" id="10090-ENSMUSP00000103066"/>
<dbReference type="ProteomicsDB" id="265562">
    <molecule id="Q09M05-4"/>
</dbReference>
<dbReference type="ProteomicsDB" id="265563">
    <molecule id="Q09M05-2"/>
</dbReference>
<dbReference type="ProteomicsDB" id="265564">
    <molecule id="Q09M05-3"/>
</dbReference>
<dbReference type="ProteomicsDB" id="265565">
    <molecule id="Q09M05-4"/>
</dbReference>
<dbReference type="Antibodypedia" id="78500">
    <property type="antibodies" value="41 antibodies from 17 providers"/>
</dbReference>
<dbReference type="DNASU" id="244071"/>
<dbReference type="Ensembl" id="ENSMUST00000026854.10">
    <molecule id="Q09M05-2"/>
    <property type="protein sequence ID" value="ENSMUSP00000026854.4"/>
    <property type="gene ID" value="ENSMUSG00000025754.12"/>
</dbReference>
<dbReference type="Ensembl" id="ENSMUST00000107442.3">
    <molecule id="Q09M05-3"/>
    <property type="protein sequence ID" value="ENSMUSP00000103066.3"/>
    <property type="gene ID" value="ENSMUSG00000025754.12"/>
</dbReference>
<dbReference type="GeneID" id="244071"/>
<dbReference type="KEGG" id="mmu:244071"/>
<dbReference type="UCSC" id="uc009hxb.1">
    <molecule id="Q09M05-2"/>
    <property type="organism name" value="mouse"/>
</dbReference>
<dbReference type="UCSC" id="uc009hxc.1">
    <molecule id="Q09M05-4"/>
    <property type="organism name" value="mouse"/>
</dbReference>
<dbReference type="UCSC" id="uc012fnc.1">
    <molecule id="Q09M05-4"/>
    <property type="organism name" value="mouse"/>
</dbReference>
<dbReference type="AGR" id="MGI:3646469"/>
<dbReference type="CTD" id="123624"/>
<dbReference type="MGI" id="MGI:3646469">
    <property type="gene designation" value="Agbl1"/>
</dbReference>
<dbReference type="VEuPathDB" id="HostDB:ENSMUSG00000025754"/>
<dbReference type="eggNOG" id="KOG3641">
    <property type="taxonomic scope" value="Eukaryota"/>
</dbReference>
<dbReference type="GeneTree" id="ENSGT00940000160936"/>
<dbReference type="HOGENOM" id="CLU_007391_1_0_1"/>
<dbReference type="InParanoid" id="Q09M05"/>
<dbReference type="OrthoDB" id="10253041at2759"/>
<dbReference type="TreeFam" id="TF333192"/>
<dbReference type="BioGRID-ORCS" id="244071">
    <property type="hits" value="0 hits in 24 CRISPR screens"/>
</dbReference>
<dbReference type="ChiTaRS" id="Agbl1">
    <property type="organism name" value="mouse"/>
</dbReference>
<dbReference type="PRO" id="PR:Q09M05"/>
<dbReference type="Proteomes" id="UP000000589">
    <property type="component" value="Chromosome 7"/>
</dbReference>
<dbReference type="RNAct" id="Q09M05">
    <property type="molecule type" value="protein"/>
</dbReference>
<dbReference type="Bgee" id="ENSMUSG00000025754">
    <property type="expression patterns" value="Expressed in hindlimb stylopod muscle and 41 other cell types or tissues"/>
</dbReference>
<dbReference type="ExpressionAtlas" id="Q09M05">
    <property type="expression patterns" value="baseline and differential"/>
</dbReference>
<dbReference type="GO" id="GO:0005829">
    <property type="term" value="C:cytosol"/>
    <property type="evidence" value="ECO:0000304"/>
    <property type="project" value="Reactome"/>
</dbReference>
<dbReference type="GO" id="GO:0004181">
    <property type="term" value="F:metallocarboxypeptidase activity"/>
    <property type="evidence" value="ECO:0000314"/>
    <property type="project" value="UniProtKB"/>
</dbReference>
<dbReference type="GO" id="GO:0015631">
    <property type="term" value="F:tubulin binding"/>
    <property type="evidence" value="ECO:0000314"/>
    <property type="project" value="UniProtKB"/>
</dbReference>
<dbReference type="GO" id="GO:0008270">
    <property type="term" value="F:zinc ion binding"/>
    <property type="evidence" value="ECO:0007669"/>
    <property type="project" value="InterPro"/>
</dbReference>
<dbReference type="GO" id="GO:0035609">
    <property type="term" value="P:C-terminal protein deglutamylation"/>
    <property type="evidence" value="ECO:0000314"/>
    <property type="project" value="UniProtKB"/>
</dbReference>
<dbReference type="GO" id="GO:0035610">
    <property type="term" value="P:protein side chain deglutamylation"/>
    <property type="evidence" value="ECO:0000314"/>
    <property type="project" value="UniProtKB"/>
</dbReference>
<dbReference type="GO" id="GO:0006508">
    <property type="term" value="P:proteolysis"/>
    <property type="evidence" value="ECO:0007669"/>
    <property type="project" value="UniProtKB-KW"/>
</dbReference>
<dbReference type="CDD" id="cd06906">
    <property type="entry name" value="M14_Nna1"/>
    <property type="match status" value="1"/>
</dbReference>
<dbReference type="FunFam" id="1.25.10.10:FF:000391">
    <property type="entry name" value="ATP/GTP binding protein like 1"/>
    <property type="match status" value="1"/>
</dbReference>
<dbReference type="FunFam" id="2.60.40.3120:FF:000001">
    <property type="entry name" value="cytosolic carboxypeptidase 1 isoform X1"/>
    <property type="match status" value="1"/>
</dbReference>
<dbReference type="Gene3D" id="2.60.40.3120">
    <property type="match status" value="1"/>
</dbReference>
<dbReference type="Gene3D" id="1.25.10.10">
    <property type="entry name" value="Leucine-rich Repeat Variant"/>
    <property type="match status" value="1"/>
</dbReference>
<dbReference type="Gene3D" id="3.40.630.10">
    <property type="entry name" value="Zn peptidases"/>
    <property type="match status" value="1"/>
</dbReference>
<dbReference type="InterPro" id="IPR011989">
    <property type="entry name" value="ARM-like"/>
</dbReference>
<dbReference type="InterPro" id="IPR016024">
    <property type="entry name" value="ARM-type_fold"/>
</dbReference>
<dbReference type="InterPro" id="IPR033852">
    <property type="entry name" value="CBPC1/4"/>
</dbReference>
<dbReference type="InterPro" id="IPR050821">
    <property type="entry name" value="Cytosolic_carboxypeptidase"/>
</dbReference>
<dbReference type="InterPro" id="IPR040626">
    <property type="entry name" value="Pepdidase_M14_N"/>
</dbReference>
<dbReference type="InterPro" id="IPR000834">
    <property type="entry name" value="Peptidase_M14"/>
</dbReference>
<dbReference type="PANTHER" id="PTHR12756">
    <property type="entry name" value="CYTOSOLIC CARBOXYPEPTIDASE"/>
    <property type="match status" value="1"/>
</dbReference>
<dbReference type="PANTHER" id="PTHR12756:SF5">
    <property type="entry name" value="CYTOSOLIC CARBOXYPEPTIDASE 4"/>
    <property type="match status" value="1"/>
</dbReference>
<dbReference type="Pfam" id="PF18027">
    <property type="entry name" value="Pepdidase_M14_N"/>
    <property type="match status" value="1"/>
</dbReference>
<dbReference type="Pfam" id="PF00246">
    <property type="entry name" value="Peptidase_M14"/>
    <property type="match status" value="1"/>
</dbReference>
<dbReference type="SUPFAM" id="SSF48371">
    <property type="entry name" value="ARM repeat"/>
    <property type="match status" value="1"/>
</dbReference>
<dbReference type="SUPFAM" id="SSF53187">
    <property type="entry name" value="Zn-dependent exopeptidases"/>
    <property type="match status" value="1"/>
</dbReference>
<dbReference type="PROSITE" id="PS52035">
    <property type="entry name" value="PEPTIDASE_M14"/>
    <property type="match status" value="1"/>
</dbReference>
<gene>
    <name evidence="12" type="primary">Agbl1</name>
    <name evidence="8" type="synonym">Ccp4</name>
</gene>
<name>CBPC4_MOUSE</name>
<feature type="chain" id="PRO_0000305000" description="Cytosolic carboxypeptidase 4">
    <location>
        <begin position="1"/>
        <end position="1122"/>
    </location>
</feature>
<feature type="domain" description="Peptidase M14" evidence="3">
    <location>
        <begin position="731"/>
        <end position="1021"/>
    </location>
</feature>
<feature type="region of interest" description="Disordered" evidence="4">
    <location>
        <begin position="287"/>
        <end position="338"/>
    </location>
</feature>
<feature type="region of interest" description="Disordered" evidence="4">
    <location>
        <begin position="1099"/>
        <end position="1122"/>
    </location>
</feature>
<feature type="compositionally biased region" description="Acidic residues" evidence="4">
    <location>
        <begin position="299"/>
        <end position="313"/>
    </location>
</feature>
<feature type="active site" description="Proton donor/acceptor" evidence="3">
    <location>
        <position position="985"/>
    </location>
</feature>
<feature type="binding site" evidence="3">
    <location>
        <position position="803"/>
    </location>
    <ligand>
        <name>Zn(2+)</name>
        <dbReference type="ChEBI" id="CHEBI:29105"/>
        <note>catalytic</note>
    </ligand>
</feature>
<feature type="binding site" evidence="3">
    <location>
        <position position="806"/>
    </location>
    <ligand>
        <name>Zn(2+)</name>
        <dbReference type="ChEBI" id="CHEBI:29105"/>
        <note>catalytic</note>
    </ligand>
</feature>
<feature type="binding site" evidence="3">
    <location>
        <position position="900"/>
    </location>
    <ligand>
        <name>Zn(2+)</name>
        <dbReference type="ChEBI" id="CHEBI:29105"/>
        <note>catalytic</note>
    </ligand>
</feature>
<feature type="splice variant" id="VSP_060162" description="In isoform 3 and isoform 2.">
    <location>
        <begin position="1"/>
        <end position="252"/>
    </location>
</feature>
<feature type="splice variant" id="VSP_060163" description="In isoform 2.">
    <original>FCDFHGHS</original>
    <variation>SHFLLFIL</variation>
    <location>
        <begin position="896"/>
        <end position="903"/>
    </location>
</feature>
<feature type="splice variant" id="VSP_060164" description="In isoform 2.">
    <location>
        <begin position="904"/>
        <end position="1122"/>
    </location>
</feature>
<feature type="splice variant" id="VSP_060165" description="In isoform 3.">
    <original>GLQFGTGELEEMGAMYCLGLL</original>
    <variation>VCEVYTARSLCSAADHKNRGK</variation>
    <location>
        <begin position="998"/>
        <end position="1018"/>
    </location>
</feature>
<feature type="splice variant" id="VSP_060166" description="In isoform 3.">
    <location>
        <begin position="1019"/>
        <end position="1122"/>
    </location>
</feature>
<feature type="mutagenesis site" description="Abolishes deglutamylase activity; when associated with Q-806." evidence="6">
    <original>H</original>
    <variation>S</variation>
    <location>
        <position position="803"/>
    </location>
</feature>
<feature type="mutagenesis site" description="Abolishes deglutamylase activity; when associated with S-803." evidence="6">
    <original>E</original>
    <variation>Q</variation>
    <location>
        <position position="806"/>
    </location>
</feature>
<feature type="sequence conflict" description="In Ref. 2; CAZ69802." evidence="10" ref="2">
    <original>SKHL</original>
    <variation>KSNC</variation>
    <location>
        <begin position="176"/>
        <end position="179"/>
    </location>
</feature>
<feature type="sequence conflict" description="In Ref. 2; CAZ69802." evidence="10" ref="2">
    <original>S</original>
    <variation>I</variation>
    <location>
        <position position="243"/>
    </location>
</feature>
<sequence>MAEQEGSGLQMLLHTLQNSSDKASTLSILQVLGDLLSVGTDRRIYYMISKGGSEALLQTLVDTARSSSPDWDILLPLFRLLAKVGLRDKKFGQKALELEALDVTLILARKNLSHSQNLLHCLWVLRVFASSVTTGAMLGINGAMELLFKVLSPYTRKHTRTIRAATEVLAALLKSSKHLRRAVNRGYVNSLLRLHQDWHSRDVTNTYVTIRHGLLLCLRHIVALRSGREAFLAAQGMETLFSSAQTCLENKNMELVISAVIQILRQCYPASRLPLVTASSAYTFPAPGSTSSELPLNLTEEDFDDDGDEEMDKDSDVEAVKEDDDLETDLSKLSSKPGLDLPEEELAQYDAMCPELSCSFEELEPKCGDDLNNKDTLHANHHHIPSVASLRQHCFNREHSSWRQEREDTVHSSILHMVKTGKSGVPSSSKQRSATNVNQSLQQNGLEIDSSGHDTSDIQAPLEQAAWDMEAISCPRITASFPNSTKPEESIGAAEKLLHTHAKHIPFHDPHLYIANAMRTRSAVGFKTMAFPDLWGHCPPPAAQPMLDRKLGVQRIKILEDIRRLLHPSDVINKVVFSLDEPRPLQGSISNCLMFHSKFESGNLRKAIQVREFEYDLLVNADVNSSQHQQWFYFKVSGMRAAVPYHFNIINCEKPNSQFNYGMQPTLYSVKEALLGRPAWIRTGSDICYYKNHYRQNAATMDGALGKRYYTLTFAVTFPHNEDACYLAYHYPYTYSTLMTHLEILERSIDHREIYFRHDVLCQTLGGNPCPLVTITAFPESNSTEHLEQFRCRPYQVITARVHPGESNASWVMKGTLEFLVSSDPVAKLLRENFVFKIIPMLNPDGVINGNHRCSLRGEDLNRQWLSPQAHLQPTIYHAKGLLHYLSSTGRGPVVFCDFHGHSQKKNVFLYGCSMKETLWQAGCTVGESALLEDVSYRTLPKILDKLAPAFTMNSCSFLVEKSRASTARVVVWREMGVSRSYTMESSYCGCNQGPYQGLQFGTGELEEMGAMYCLGLLILELKSVNCSHKLLARASSLLNADVLEHYLQRCSSSSSNSSNRTSEVDDEPYCMEEIDYSADSSSDAEQNFTELDRQIQECALNKDEEEEEKEEGTGWRRRSVT</sequence>
<proteinExistence type="evidence at protein level"/>
<accession>Q09M05</accession>
<accession>Q8C768</accession>